<dbReference type="EMBL" id="CP000920">
    <property type="protein sequence ID" value="ACO20827.1"/>
    <property type="molecule type" value="Genomic_DNA"/>
</dbReference>
<dbReference type="RefSeq" id="WP_001808836.1">
    <property type="nucleotide sequence ID" value="NC_012467.1"/>
</dbReference>
<dbReference type="SMR" id="C1CIC0"/>
<dbReference type="GeneID" id="93964224"/>
<dbReference type="KEGG" id="spp:SPP_0283"/>
<dbReference type="HOGENOM" id="CLU_135723_6_2_9"/>
<dbReference type="GO" id="GO:0005737">
    <property type="term" value="C:cytoplasm"/>
    <property type="evidence" value="ECO:0007669"/>
    <property type="project" value="UniProtKB-ARBA"/>
</dbReference>
<dbReference type="GO" id="GO:1990904">
    <property type="term" value="C:ribonucleoprotein complex"/>
    <property type="evidence" value="ECO:0007669"/>
    <property type="project" value="UniProtKB-KW"/>
</dbReference>
<dbReference type="GO" id="GO:0005840">
    <property type="term" value="C:ribosome"/>
    <property type="evidence" value="ECO:0007669"/>
    <property type="project" value="UniProtKB-KW"/>
</dbReference>
<dbReference type="GO" id="GO:0003735">
    <property type="term" value="F:structural constituent of ribosome"/>
    <property type="evidence" value="ECO:0007669"/>
    <property type="project" value="InterPro"/>
</dbReference>
<dbReference type="GO" id="GO:0006412">
    <property type="term" value="P:translation"/>
    <property type="evidence" value="ECO:0007669"/>
    <property type="project" value="UniProtKB-UniRule"/>
</dbReference>
<dbReference type="HAMAP" id="MF_00251">
    <property type="entry name" value="Ribosomal_bL36"/>
    <property type="match status" value="1"/>
</dbReference>
<dbReference type="InterPro" id="IPR000473">
    <property type="entry name" value="Ribosomal_bL36"/>
</dbReference>
<dbReference type="InterPro" id="IPR035977">
    <property type="entry name" value="Ribosomal_bL36_sp"/>
</dbReference>
<dbReference type="NCBIfam" id="TIGR01022">
    <property type="entry name" value="rpmJ_bact"/>
    <property type="match status" value="1"/>
</dbReference>
<dbReference type="PANTHER" id="PTHR42888">
    <property type="entry name" value="50S RIBOSOMAL PROTEIN L36, CHLOROPLASTIC"/>
    <property type="match status" value="1"/>
</dbReference>
<dbReference type="PANTHER" id="PTHR42888:SF1">
    <property type="entry name" value="LARGE RIBOSOMAL SUBUNIT PROTEIN BL36C"/>
    <property type="match status" value="1"/>
</dbReference>
<dbReference type="Pfam" id="PF00444">
    <property type="entry name" value="Ribosomal_L36"/>
    <property type="match status" value="1"/>
</dbReference>
<dbReference type="SUPFAM" id="SSF57840">
    <property type="entry name" value="Ribosomal protein L36"/>
    <property type="match status" value="1"/>
</dbReference>
<dbReference type="PROSITE" id="PS00828">
    <property type="entry name" value="RIBOSOMAL_L36"/>
    <property type="match status" value="1"/>
</dbReference>
<name>RL36_STRZP</name>
<keyword id="KW-0687">Ribonucleoprotein</keyword>
<keyword id="KW-0689">Ribosomal protein</keyword>
<proteinExistence type="inferred from homology"/>
<evidence type="ECO:0000255" key="1">
    <source>
        <dbReference type="HAMAP-Rule" id="MF_00251"/>
    </source>
</evidence>
<evidence type="ECO:0000305" key="2"/>
<accession>C1CIC0</accession>
<reference key="1">
    <citation type="journal article" date="2010" name="Genome Biol.">
        <title>Structure and dynamics of the pan-genome of Streptococcus pneumoniae and closely related species.</title>
        <authorList>
            <person name="Donati C."/>
            <person name="Hiller N.L."/>
            <person name="Tettelin H."/>
            <person name="Muzzi A."/>
            <person name="Croucher N.J."/>
            <person name="Angiuoli S.V."/>
            <person name="Oggioni M."/>
            <person name="Dunning Hotopp J.C."/>
            <person name="Hu F.Z."/>
            <person name="Riley D.R."/>
            <person name="Covacci A."/>
            <person name="Mitchell T.J."/>
            <person name="Bentley S.D."/>
            <person name="Kilian M."/>
            <person name="Ehrlich G.D."/>
            <person name="Rappuoli R."/>
            <person name="Moxon E.R."/>
            <person name="Masignani V."/>
        </authorList>
    </citation>
    <scope>NUCLEOTIDE SEQUENCE [LARGE SCALE GENOMIC DNA]</scope>
    <source>
        <strain>P1031</strain>
    </source>
</reference>
<feature type="chain" id="PRO_1000125506" description="Large ribosomal subunit protein bL36">
    <location>
        <begin position="1"/>
        <end position="38"/>
    </location>
</feature>
<protein>
    <recommendedName>
        <fullName evidence="1">Large ribosomal subunit protein bL36</fullName>
    </recommendedName>
    <alternativeName>
        <fullName evidence="2">50S ribosomal protein L36</fullName>
    </alternativeName>
</protein>
<gene>
    <name evidence="1" type="primary">rpmJ</name>
    <name type="ordered locus">SPP_0283</name>
</gene>
<organism>
    <name type="scientific">Streptococcus pneumoniae (strain P1031)</name>
    <dbReference type="NCBI Taxonomy" id="488223"/>
    <lineage>
        <taxon>Bacteria</taxon>
        <taxon>Bacillati</taxon>
        <taxon>Bacillota</taxon>
        <taxon>Bacilli</taxon>
        <taxon>Lactobacillales</taxon>
        <taxon>Streptococcaceae</taxon>
        <taxon>Streptococcus</taxon>
    </lineage>
</organism>
<sequence>MKVRPSVKPICEYCKVIRRNGRVMVICPANPKHKQRQG</sequence>
<comment type="similarity">
    <text evidence="1">Belongs to the bacterial ribosomal protein bL36 family.</text>
</comment>